<proteinExistence type="inferred from homology"/>
<gene>
    <name evidence="1" type="primary">pckA</name>
    <name type="ordered locus">Spea_0140</name>
</gene>
<evidence type="ECO:0000255" key="1">
    <source>
        <dbReference type="HAMAP-Rule" id="MF_00453"/>
    </source>
</evidence>
<sequence>MADGSNREYLNLSTGQLVELALARGEGQLTANGALVAKTGERSGRSPNDRFIVKEPSSEADIEWGPVNKPFKADAFTALWNRVEAFLADKDTFVSNLEVGASKEHYQPVKVTTQYAWHQLFARNLFIVPEEFNAADKPVWQIINAPGFECVPERDGTHSDATVIINFAERKVLLAGLKYAGEMKKSMFSVQNFLLPAKGVLPMHCSANVGADGDTTLFFGLSGTGKTTLSADPKRFLIGDDEHGWAPGGVFNIEGGCYAKCIDLSQKNEPVIWDAIRFGTVLENVVTDENRVPDYTNSSLTENTRAAYPLEHIAQRKLDNCGAEPHAVVFLTCDVSGVLPPVSKLTKEQAAYHFLSGYTAKVGSTEMGSTAAIQSTFSTCFGAPFFPRPAGVYAELLMKRIESFGSQVYLVNTGWTGGPHGIGKRFDIPTTRAIVDAIVSGELKDVETEYLEKLNLHVPVAIPGVDSKLLNPINTWEDKVQYAEFAQHLADSFKANFEKYQVPDSIKNAGPNA</sequence>
<keyword id="KW-0067">ATP-binding</keyword>
<keyword id="KW-0963">Cytoplasm</keyword>
<keyword id="KW-0210">Decarboxylase</keyword>
<keyword id="KW-0312">Gluconeogenesis</keyword>
<keyword id="KW-0456">Lyase</keyword>
<keyword id="KW-0464">Manganese</keyword>
<keyword id="KW-0479">Metal-binding</keyword>
<keyword id="KW-0547">Nucleotide-binding</keyword>
<keyword id="KW-1185">Reference proteome</keyword>
<protein>
    <recommendedName>
        <fullName evidence="1">Phosphoenolpyruvate carboxykinase (ATP)</fullName>
        <shortName evidence="1">PCK</shortName>
        <shortName evidence="1">PEP carboxykinase</shortName>
        <shortName evidence="1">PEPCK</shortName>
        <ecNumber evidence="1">4.1.1.49</ecNumber>
    </recommendedName>
</protein>
<reference key="1">
    <citation type="submission" date="2007-10" db="EMBL/GenBank/DDBJ databases">
        <title>Complete sequence of Shewanella pealeana ATCC 700345.</title>
        <authorList>
            <consortium name="US DOE Joint Genome Institute"/>
            <person name="Copeland A."/>
            <person name="Lucas S."/>
            <person name="Lapidus A."/>
            <person name="Barry K."/>
            <person name="Glavina del Rio T."/>
            <person name="Dalin E."/>
            <person name="Tice H."/>
            <person name="Pitluck S."/>
            <person name="Chertkov O."/>
            <person name="Brettin T."/>
            <person name="Bruce D."/>
            <person name="Detter J.C."/>
            <person name="Han C."/>
            <person name="Schmutz J."/>
            <person name="Larimer F."/>
            <person name="Land M."/>
            <person name="Hauser L."/>
            <person name="Kyrpides N."/>
            <person name="Kim E."/>
            <person name="Zhao J.-S.Z."/>
            <person name="Manno D."/>
            <person name="Hawari J."/>
            <person name="Richardson P."/>
        </authorList>
    </citation>
    <scope>NUCLEOTIDE SEQUENCE [LARGE SCALE GENOMIC DNA]</scope>
    <source>
        <strain>ATCC 700345 / ANG-SQ1</strain>
    </source>
</reference>
<dbReference type="EC" id="4.1.1.49" evidence="1"/>
<dbReference type="EMBL" id="CP000851">
    <property type="protein sequence ID" value="ABV85469.1"/>
    <property type="molecule type" value="Genomic_DNA"/>
</dbReference>
<dbReference type="RefSeq" id="WP_012153415.1">
    <property type="nucleotide sequence ID" value="NC_009901.1"/>
</dbReference>
<dbReference type="SMR" id="A8GYT2"/>
<dbReference type="STRING" id="398579.Spea_0140"/>
<dbReference type="KEGG" id="spl:Spea_0140"/>
<dbReference type="eggNOG" id="COG1866">
    <property type="taxonomic scope" value="Bacteria"/>
</dbReference>
<dbReference type="HOGENOM" id="CLU_018247_0_1_6"/>
<dbReference type="OrthoDB" id="9806325at2"/>
<dbReference type="UniPathway" id="UPA00138"/>
<dbReference type="Proteomes" id="UP000002608">
    <property type="component" value="Chromosome"/>
</dbReference>
<dbReference type="GO" id="GO:0005829">
    <property type="term" value="C:cytosol"/>
    <property type="evidence" value="ECO:0007669"/>
    <property type="project" value="TreeGrafter"/>
</dbReference>
<dbReference type="GO" id="GO:0005524">
    <property type="term" value="F:ATP binding"/>
    <property type="evidence" value="ECO:0007669"/>
    <property type="project" value="UniProtKB-UniRule"/>
</dbReference>
<dbReference type="GO" id="GO:0046872">
    <property type="term" value="F:metal ion binding"/>
    <property type="evidence" value="ECO:0007669"/>
    <property type="project" value="UniProtKB-KW"/>
</dbReference>
<dbReference type="GO" id="GO:0004612">
    <property type="term" value="F:phosphoenolpyruvate carboxykinase (ATP) activity"/>
    <property type="evidence" value="ECO:0007669"/>
    <property type="project" value="UniProtKB-UniRule"/>
</dbReference>
<dbReference type="GO" id="GO:0006094">
    <property type="term" value="P:gluconeogenesis"/>
    <property type="evidence" value="ECO:0007669"/>
    <property type="project" value="UniProtKB-UniRule"/>
</dbReference>
<dbReference type="CDD" id="cd00484">
    <property type="entry name" value="PEPCK_ATP"/>
    <property type="match status" value="1"/>
</dbReference>
<dbReference type="FunFam" id="2.170.8.10:FF:000001">
    <property type="entry name" value="Phosphoenolpyruvate carboxykinase (ATP)"/>
    <property type="match status" value="1"/>
</dbReference>
<dbReference type="Gene3D" id="3.90.228.20">
    <property type="match status" value="1"/>
</dbReference>
<dbReference type="Gene3D" id="3.40.449.10">
    <property type="entry name" value="Phosphoenolpyruvate Carboxykinase, domain 1"/>
    <property type="match status" value="1"/>
</dbReference>
<dbReference type="Gene3D" id="2.170.8.10">
    <property type="entry name" value="Phosphoenolpyruvate Carboxykinase, domain 2"/>
    <property type="match status" value="1"/>
</dbReference>
<dbReference type="HAMAP" id="MF_00453">
    <property type="entry name" value="PEPCK_ATP"/>
    <property type="match status" value="1"/>
</dbReference>
<dbReference type="InterPro" id="IPR001272">
    <property type="entry name" value="PEP_carboxykinase_ATP"/>
</dbReference>
<dbReference type="InterPro" id="IPR013035">
    <property type="entry name" value="PEP_carboxykinase_C"/>
</dbReference>
<dbReference type="InterPro" id="IPR008210">
    <property type="entry name" value="PEP_carboxykinase_N"/>
</dbReference>
<dbReference type="InterPro" id="IPR015994">
    <property type="entry name" value="PEPCK_ATP_CS"/>
</dbReference>
<dbReference type="NCBIfam" id="TIGR00224">
    <property type="entry name" value="pckA"/>
    <property type="match status" value="1"/>
</dbReference>
<dbReference type="NCBIfam" id="NF006820">
    <property type="entry name" value="PRK09344.1-2"/>
    <property type="match status" value="1"/>
</dbReference>
<dbReference type="NCBIfam" id="NF006821">
    <property type="entry name" value="PRK09344.1-3"/>
    <property type="match status" value="1"/>
</dbReference>
<dbReference type="NCBIfam" id="NF006823">
    <property type="entry name" value="PRK09344.1-5"/>
    <property type="match status" value="1"/>
</dbReference>
<dbReference type="PANTHER" id="PTHR30031:SF0">
    <property type="entry name" value="PHOSPHOENOLPYRUVATE CARBOXYKINASE (ATP)"/>
    <property type="match status" value="1"/>
</dbReference>
<dbReference type="PANTHER" id="PTHR30031">
    <property type="entry name" value="PHOSPHOENOLPYRUVATE CARBOXYKINASE ATP"/>
    <property type="match status" value="1"/>
</dbReference>
<dbReference type="Pfam" id="PF01293">
    <property type="entry name" value="PEPCK_ATP"/>
    <property type="match status" value="1"/>
</dbReference>
<dbReference type="PIRSF" id="PIRSF006294">
    <property type="entry name" value="PEP_crbxkin"/>
    <property type="match status" value="1"/>
</dbReference>
<dbReference type="SUPFAM" id="SSF68923">
    <property type="entry name" value="PEP carboxykinase N-terminal domain"/>
    <property type="match status" value="1"/>
</dbReference>
<dbReference type="SUPFAM" id="SSF53795">
    <property type="entry name" value="PEP carboxykinase-like"/>
    <property type="match status" value="1"/>
</dbReference>
<dbReference type="PROSITE" id="PS00532">
    <property type="entry name" value="PEPCK_ATP"/>
    <property type="match status" value="1"/>
</dbReference>
<name>PCKA_SHEPA</name>
<feature type="chain" id="PRO_1000081003" description="Phosphoenolpyruvate carboxykinase (ATP)">
    <location>
        <begin position="1"/>
        <end position="513"/>
    </location>
</feature>
<feature type="binding site" evidence="1">
    <location>
        <position position="45"/>
    </location>
    <ligand>
        <name>substrate</name>
    </ligand>
</feature>
<feature type="binding site" evidence="1">
    <location>
        <position position="179"/>
    </location>
    <ligand>
        <name>substrate</name>
    </ligand>
</feature>
<feature type="binding site" evidence="1">
    <location>
        <position position="185"/>
    </location>
    <ligand>
        <name>ATP</name>
        <dbReference type="ChEBI" id="CHEBI:30616"/>
    </ligand>
</feature>
<feature type="binding site" evidence="1">
    <location>
        <position position="185"/>
    </location>
    <ligand>
        <name>Mn(2+)</name>
        <dbReference type="ChEBI" id="CHEBI:29035"/>
    </ligand>
</feature>
<feature type="binding site" evidence="1">
    <location>
        <position position="185"/>
    </location>
    <ligand>
        <name>substrate</name>
    </ligand>
</feature>
<feature type="binding site" evidence="1">
    <location>
        <position position="204"/>
    </location>
    <ligand>
        <name>ATP</name>
        <dbReference type="ChEBI" id="CHEBI:30616"/>
    </ligand>
</feature>
<feature type="binding site" evidence="1">
    <location>
        <position position="204"/>
    </location>
    <ligand>
        <name>Mn(2+)</name>
        <dbReference type="ChEBI" id="CHEBI:29035"/>
    </ligand>
</feature>
<feature type="binding site" evidence="1">
    <location>
        <begin position="220"/>
        <end position="228"/>
    </location>
    <ligand>
        <name>ATP</name>
        <dbReference type="ChEBI" id="CHEBI:30616"/>
    </ligand>
</feature>
<feature type="binding site" evidence="1">
    <location>
        <position position="241"/>
    </location>
    <ligand>
        <name>Mn(2+)</name>
        <dbReference type="ChEBI" id="CHEBI:29035"/>
    </ligand>
</feature>
<feature type="binding site" evidence="1">
    <location>
        <position position="269"/>
    </location>
    <ligand>
        <name>ATP</name>
        <dbReference type="ChEBI" id="CHEBI:30616"/>
    </ligand>
</feature>
<feature type="binding site" evidence="1">
    <location>
        <position position="305"/>
    </location>
    <ligand>
        <name>ATP</name>
        <dbReference type="ChEBI" id="CHEBI:30616"/>
    </ligand>
</feature>
<feature type="binding site" evidence="1">
    <location>
        <position position="305"/>
    </location>
    <ligand>
        <name>substrate</name>
    </ligand>
</feature>
<feature type="binding site" evidence="1">
    <location>
        <position position="431"/>
    </location>
    <ligand>
        <name>ATP</name>
        <dbReference type="ChEBI" id="CHEBI:30616"/>
    </ligand>
</feature>
<comment type="function">
    <text evidence="1">Involved in the gluconeogenesis. Catalyzes the conversion of oxaloacetate (OAA) to phosphoenolpyruvate (PEP) through direct phosphoryl transfer between the nucleoside triphosphate and OAA.</text>
</comment>
<comment type="catalytic activity">
    <reaction evidence="1">
        <text>oxaloacetate + ATP = phosphoenolpyruvate + ADP + CO2</text>
        <dbReference type="Rhea" id="RHEA:18617"/>
        <dbReference type="ChEBI" id="CHEBI:16452"/>
        <dbReference type="ChEBI" id="CHEBI:16526"/>
        <dbReference type="ChEBI" id="CHEBI:30616"/>
        <dbReference type="ChEBI" id="CHEBI:58702"/>
        <dbReference type="ChEBI" id="CHEBI:456216"/>
        <dbReference type="EC" id="4.1.1.49"/>
    </reaction>
</comment>
<comment type="cofactor">
    <cofactor evidence="1">
        <name>Mn(2+)</name>
        <dbReference type="ChEBI" id="CHEBI:29035"/>
    </cofactor>
    <text evidence="1">Binds 1 Mn(2+) ion per subunit.</text>
</comment>
<comment type="pathway">
    <text evidence="1">Carbohydrate biosynthesis; gluconeogenesis.</text>
</comment>
<comment type="subunit">
    <text evidence="1">Monomer.</text>
</comment>
<comment type="subcellular location">
    <subcellularLocation>
        <location evidence="1">Cytoplasm</location>
    </subcellularLocation>
</comment>
<comment type="similarity">
    <text evidence="1">Belongs to the phosphoenolpyruvate carboxykinase (ATP) family.</text>
</comment>
<accession>A8GYT2</accession>
<organism>
    <name type="scientific">Shewanella pealeana (strain ATCC 700345 / ANG-SQ1)</name>
    <dbReference type="NCBI Taxonomy" id="398579"/>
    <lineage>
        <taxon>Bacteria</taxon>
        <taxon>Pseudomonadati</taxon>
        <taxon>Pseudomonadota</taxon>
        <taxon>Gammaproteobacteria</taxon>
        <taxon>Alteromonadales</taxon>
        <taxon>Shewanellaceae</taxon>
        <taxon>Shewanella</taxon>
    </lineage>
</organism>